<evidence type="ECO:0000255" key="1">
    <source>
        <dbReference type="HAMAP-Rule" id="MF_01395"/>
    </source>
</evidence>
<evidence type="ECO:0000255" key="2">
    <source>
        <dbReference type="PROSITE-ProRule" id="PRU01136"/>
    </source>
</evidence>
<proteinExistence type="inferred from homology"/>
<sequence>MMPKRKFQAPTERQLAVRRDNIPDALLTRCPVCHEDCYTQDLGEFKVCPHCDYGFRLPAWQRVQQLTASFEERDADLSAPVSFDDPAYLEKLQRAKAASHLNESVLTGIGTLATYQFGLGVMETKFMMGSLGAATGEKITRLFETCTTQKLPVVMVTASGGARMQEGARALMQMAKVSTAVANHRKAGLLYITILTDPTTGGVTASFAMQGDIMLSEPRALIGFAGRRVIEQTIQQTPPADFQRAETLLANGWLDQIVPRPALRKTLQRLLTITQGGHQDV</sequence>
<reference key="1">
    <citation type="journal article" date="2009" name="J. Bacteriol.">
        <title>Complete genome sequence of Lactobacillus plantarum JDM1.</title>
        <authorList>
            <person name="Zhang Z.-Y."/>
            <person name="Liu C."/>
            <person name="Zhu Y.-Z."/>
            <person name="Zhong Y."/>
            <person name="Zhu Y.-Q."/>
            <person name="Zheng H.-J."/>
            <person name="Zhao G.-P."/>
            <person name="Wang S.-Y."/>
            <person name="Guo X.-K."/>
        </authorList>
    </citation>
    <scope>NUCLEOTIDE SEQUENCE [LARGE SCALE GENOMIC DNA]</scope>
    <source>
        <strain>JDM1</strain>
    </source>
</reference>
<feature type="chain" id="PRO_0000389769" description="Acetyl-coenzyme A carboxylase carboxyl transferase subunit beta 2">
    <location>
        <begin position="1"/>
        <end position="281"/>
    </location>
</feature>
<feature type="domain" description="CoA carboxyltransferase N-terminal" evidence="2">
    <location>
        <begin position="26"/>
        <end position="281"/>
    </location>
</feature>
<feature type="zinc finger region" description="C4-type" evidence="1">
    <location>
        <begin position="30"/>
        <end position="51"/>
    </location>
</feature>
<feature type="binding site" evidence="1">
    <location>
        <position position="30"/>
    </location>
    <ligand>
        <name>Zn(2+)</name>
        <dbReference type="ChEBI" id="CHEBI:29105"/>
    </ligand>
</feature>
<feature type="binding site" evidence="1">
    <location>
        <position position="33"/>
    </location>
    <ligand>
        <name>Zn(2+)</name>
        <dbReference type="ChEBI" id="CHEBI:29105"/>
    </ligand>
</feature>
<feature type="binding site" evidence="1">
    <location>
        <position position="48"/>
    </location>
    <ligand>
        <name>Zn(2+)</name>
        <dbReference type="ChEBI" id="CHEBI:29105"/>
    </ligand>
</feature>
<feature type="binding site" evidence="1">
    <location>
        <position position="51"/>
    </location>
    <ligand>
        <name>Zn(2+)</name>
        <dbReference type="ChEBI" id="CHEBI:29105"/>
    </ligand>
</feature>
<dbReference type="EC" id="2.1.3.15" evidence="1"/>
<dbReference type="EMBL" id="CP001617">
    <property type="protein sequence ID" value="ACT62299.1"/>
    <property type="molecule type" value="Genomic_DNA"/>
</dbReference>
<dbReference type="SMR" id="C6VQ34"/>
<dbReference type="KEGG" id="lpj:JDM1_1412"/>
<dbReference type="HOGENOM" id="CLU_015486_1_1_9"/>
<dbReference type="UniPathway" id="UPA00655">
    <property type="reaction ID" value="UER00711"/>
</dbReference>
<dbReference type="GO" id="GO:0009317">
    <property type="term" value="C:acetyl-CoA carboxylase complex"/>
    <property type="evidence" value="ECO:0007669"/>
    <property type="project" value="InterPro"/>
</dbReference>
<dbReference type="GO" id="GO:0003989">
    <property type="term" value="F:acetyl-CoA carboxylase activity"/>
    <property type="evidence" value="ECO:0007669"/>
    <property type="project" value="InterPro"/>
</dbReference>
<dbReference type="GO" id="GO:0005524">
    <property type="term" value="F:ATP binding"/>
    <property type="evidence" value="ECO:0007669"/>
    <property type="project" value="UniProtKB-KW"/>
</dbReference>
<dbReference type="GO" id="GO:0016743">
    <property type="term" value="F:carboxyl- or carbamoyltransferase activity"/>
    <property type="evidence" value="ECO:0007669"/>
    <property type="project" value="UniProtKB-UniRule"/>
</dbReference>
<dbReference type="GO" id="GO:0008270">
    <property type="term" value="F:zinc ion binding"/>
    <property type="evidence" value="ECO:0007669"/>
    <property type="project" value="UniProtKB-UniRule"/>
</dbReference>
<dbReference type="GO" id="GO:0006633">
    <property type="term" value="P:fatty acid biosynthetic process"/>
    <property type="evidence" value="ECO:0007669"/>
    <property type="project" value="UniProtKB-KW"/>
</dbReference>
<dbReference type="GO" id="GO:2001295">
    <property type="term" value="P:malonyl-CoA biosynthetic process"/>
    <property type="evidence" value="ECO:0007669"/>
    <property type="project" value="UniProtKB-UniRule"/>
</dbReference>
<dbReference type="Gene3D" id="3.90.226.10">
    <property type="entry name" value="2-enoyl-CoA Hydratase, Chain A, domain 1"/>
    <property type="match status" value="1"/>
</dbReference>
<dbReference type="HAMAP" id="MF_01395">
    <property type="entry name" value="AcetylCoA_CT_beta"/>
    <property type="match status" value="1"/>
</dbReference>
<dbReference type="InterPro" id="IPR034733">
    <property type="entry name" value="AcCoA_carboxyl_beta"/>
</dbReference>
<dbReference type="InterPro" id="IPR000438">
    <property type="entry name" value="Acetyl_CoA_COase_Trfase_b_su"/>
</dbReference>
<dbReference type="InterPro" id="IPR029045">
    <property type="entry name" value="ClpP/crotonase-like_dom_sf"/>
</dbReference>
<dbReference type="InterPro" id="IPR011762">
    <property type="entry name" value="COA_CT_N"/>
</dbReference>
<dbReference type="PANTHER" id="PTHR42995">
    <property type="entry name" value="ACETYL-COENZYME A CARBOXYLASE CARBOXYL TRANSFERASE SUBUNIT BETA, CHLOROPLASTIC"/>
    <property type="match status" value="1"/>
</dbReference>
<dbReference type="PANTHER" id="PTHR42995:SF5">
    <property type="entry name" value="ACETYL-COENZYME A CARBOXYLASE CARBOXYL TRANSFERASE SUBUNIT BETA, CHLOROPLASTIC"/>
    <property type="match status" value="1"/>
</dbReference>
<dbReference type="Pfam" id="PF01039">
    <property type="entry name" value="Carboxyl_trans"/>
    <property type="match status" value="1"/>
</dbReference>
<dbReference type="PRINTS" id="PR01070">
    <property type="entry name" value="ACCCTRFRASEB"/>
</dbReference>
<dbReference type="SUPFAM" id="SSF52096">
    <property type="entry name" value="ClpP/crotonase"/>
    <property type="match status" value="1"/>
</dbReference>
<dbReference type="PROSITE" id="PS50980">
    <property type="entry name" value="COA_CT_NTER"/>
    <property type="match status" value="1"/>
</dbReference>
<comment type="function">
    <text evidence="1">Component of the acetyl coenzyme A carboxylase (ACC) complex. Biotin carboxylase (BC) catalyzes the carboxylation of biotin on its carrier protein (BCCP) and then the CO(2) group is transferred by the transcarboxylase to acetyl-CoA to form malonyl-CoA.</text>
</comment>
<comment type="catalytic activity">
    <reaction evidence="1">
        <text>N(6)-carboxybiotinyl-L-lysyl-[protein] + acetyl-CoA = N(6)-biotinyl-L-lysyl-[protein] + malonyl-CoA</text>
        <dbReference type="Rhea" id="RHEA:54728"/>
        <dbReference type="Rhea" id="RHEA-COMP:10505"/>
        <dbReference type="Rhea" id="RHEA-COMP:10506"/>
        <dbReference type="ChEBI" id="CHEBI:57288"/>
        <dbReference type="ChEBI" id="CHEBI:57384"/>
        <dbReference type="ChEBI" id="CHEBI:83144"/>
        <dbReference type="ChEBI" id="CHEBI:83145"/>
        <dbReference type="EC" id="2.1.3.15"/>
    </reaction>
</comment>
<comment type="cofactor">
    <cofactor evidence="1">
        <name>Zn(2+)</name>
        <dbReference type="ChEBI" id="CHEBI:29105"/>
    </cofactor>
    <text evidence="1">Binds 1 zinc ion per subunit.</text>
</comment>
<comment type="pathway">
    <text evidence="1">Lipid metabolism; malonyl-CoA biosynthesis; malonyl-CoA from acetyl-CoA: step 1/1.</text>
</comment>
<comment type="subunit">
    <text evidence="1">Acetyl-CoA carboxylase is a heterohexamer composed of biotin carboxyl carrier protein (AccB), biotin carboxylase (AccC) and two subunits each of ACCase subunit alpha (AccA) and ACCase subunit beta (AccD).</text>
</comment>
<comment type="subcellular location">
    <subcellularLocation>
        <location evidence="1">Cytoplasm</location>
    </subcellularLocation>
</comment>
<comment type="similarity">
    <text evidence="1">Belongs to the AccD/PCCB family.</text>
</comment>
<name>ACCD2_LACPJ</name>
<organism>
    <name type="scientific">Lactiplantibacillus plantarum (strain JDM1)</name>
    <name type="common">Lactobacillus plantarum</name>
    <dbReference type="NCBI Taxonomy" id="644042"/>
    <lineage>
        <taxon>Bacteria</taxon>
        <taxon>Bacillati</taxon>
        <taxon>Bacillota</taxon>
        <taxon>Bacilli</taxon>
        <taxon>Lactobacillales</taxon>
        <taxon>Lactobacillaceae</taxon>
        <taxon>Lactiplantibacillus</taxon>
    </lineage>
</organism>
<gene>
    <name evidence="1" type="primary">accD2</name>
    <name type="ordered locus">JDM1_1412</name>
</gene>
<keyword id="KW-0067">ATP-binding</keyword>
<keyword id="KW-0963">Cytoplasm</keyword>
<keyword id="KW-0275">Fatty acid biosynthesis</keyword>
<keyword id="KW-0276">Fatty acid metabolism</keyword>
<keyword id="KW-0444">Lipid biosynthesis</keyword>
<keyword id="KW-0443">Lipid metabolism</keyword>
<keyword id="KW-0479">Metal-binding</keyword>
<keyword id="KW-0547">Nucleotide-binding</keyword>
<keyword id="KW-0808">Transferase</keyword>
<keyword id="KW-0862">Zinc</keyword>
<keyword id="KW-0863">Zinc-finger</keyword>
<protein>
    <recommendedName>
        <fullName evidence="1">Acetyl-coenzyme A carboxylase carboxyl transferase subunit beta 2</fullName>
        <shortName evidence="1">ACCase subunit beta 2</shortName>
        <shortName evidence="1">Acetyl-CoA carboxylase carboxyltransferase subunit beta 2</shortName>
        <ecNumber evidence="1">2.1.3.15</ecNumber>
    </recommendedName>
</protein>
<accession>C6VQ34</accession>